<proteinExistence type="inferred from homology"/>
<comment type="function">
    <text evidence="1">Divalent metal cation transporter which exports Zn(2+), Cd(2+) and possibly Fe(2+). May be involved in zinc and iron detoxification by efflux.</text>
</comment>
<comment type="catalytic activity">
    <reaction evidence="1">
        <text>Zn(2+)(in) + H(+)(out) = Zn(2+)(out) + H(+)(in)</text>
        <dbReference type="Rhea" id="RHEA:28839"/>
        <dbReference type="ChEBI" id="CHEBI:15378"/>
        <dbReference type="ChEBI" id="CHEBI:29105"/>
    </reaction>
</comment>
<comment type="catalytic activity">
    <reaction evidence="1">
        <text>Cd(2+)(in) + H(+)(out) = Cd(2+)(out) + H(+)(in)</text>
        <dbReference type="Rhea" id="RHEA:28739"/>
        <dbReference type="ChEBI" id="CHEBI:15378"/>
        <dbReference type="ChEBI" id="CHEBI:48775"/>
    </reaction>
</comment>
<comment type="catalytic activity">
    <reaction evidence="1">
        <text>Fe(2+)(in) + H(+)(out) = Fe(2+)(out) + H(+)(in)</text>
        <dbReference type="Rhea" id="RHEA:29439"/>
        <dbReference type="ChEBI" id="CHEBI:15378"/>
        <dbReference type="ChEBI" id="CHEBI:29033"/>
    </reaction>
</comment>
<comment type="subunit">
    <text evidence="1">Homodimer.</text>
</comment>
<comment type="subcellular location">
    <subcellularLocation>
        <location evidence="1">Cell inner membrane</location>
        <topology evidence="1">Multi-pass membrane protein</topology>
    </subcellularLocation>
</comment>
<comment type="similarity">
    <text evidence="1">Belongs to the cation diffusion facilitator (CDF) transporter (TC 2.A.4) family. FieF subfamily.</text>
</comment>
<name>FIEF_YERPA</name>
<evidence type="ECO:0000255" key="1">
    <source>
        <dbReference type="HAMAP-Rule" id="MF_01425"/>
    </source>
</evidence>
<dbReference type="EMBL" id="CP000308">
    <property type="protein sequence ID" value="ABG15426.1"/>
    <property type="molecule type" value="Genomic_DNA"/>
</dbReference>
<dbReference type="RefSeq" id="WP_002208967.1">
    <property type="nucleotide sequence ID" value="NZ_CP009906.1"/>
</dbReference>
<dbReference type="SMR" id="Q1C296"/>
<dbReference type="GeneID" id="57974515"/>
<dbReference type="KEGG" id="ypa:YPA_3464"/>
<dbReference type="Proteomes" id="UP000001971">
    <property type="component" value="Chromosome"/>
</dbReference>
<dbReference type="GO" id="GO:0005886">
    <property type="term" value="C:plasma membrane"/>
    <property type="evidence" value="ECO:0007669"/>
    <property type="project" value="UniProtKB-SubCell"/>
</dbReference>
<dbReference type="GO" id="GO:0015086">
    <property type="term" value="F:cadmium ion transmembrane transporter activity"/>
    <property type="evidence" value="ECO:0007669"/>
    <property type="project" value="UniProtKB-UniRule"/>
</dbReference>
<dbReference type="GO" id="GO:0015093">
    <property type="term" value="F:ferrous iron transmembrane transporter activity"/>
    <property type="evidence" value="ECO:0007669"/>
    <property type="project" value="TreeGrafter"/>
</dbReference>
<dbReference type="GO" id="GO:0046872">
    <property type="term" value="F:metal ion binding"/>
    <property type="evidence" value="ECO:0007669"/>
    <property type="project" value="UniProtKB-KW"/>
</dbReference>
<dbReference type="GO" id="GO:0015341">
    <property type="term" value="F:zinc efflux antiporter activity"/>
    <property type="evidence" value="ECO:0007669"/>
    <property type="project" value="TreeGrafter"/>
</dbReference>
<dbReference type="GO" id="GO:0006882">
    <property type="term" value="P:intracellular zinc ion homeostasis"/>
    <property type="evidence" value="ECO:0007669"/>
    <property type="project" value="TreeGrafter"/>
</dbReference>
<dbReference type="FunFam" id="1.20.1510.10:FF:000001">
    <property type="entry name" value="Ferrous-iron efflux pump FieF"/>
    <property type="match status" value="1"/>
</dbReference>
<dbReference type="FunFam" id="3.30.70.1350:FF:000002">
    <property type="entry name" value="Ferrous-iron efflux pump FieF"/>
    <property type="match status" value="1"/>
</dbReference>
<dbReference type="Gene3D" id="1.20.1510.10">
    <property type="entry name" value="Cation efflux protein transmembrane domain"/>
    <property type="match status" value="1"/>
</dbReference>
<dbReference type="Gene3D" id="3.30.70.1350">
    <property type="entry name" value="Cation efflux protein, cytoplasmic domain"/>
    <property type="match status" value="1"/>
</dbReference>
<dbReference type="HAMAP" id="MF_01425">
    <property type="entry name" value="Cation_efflux_FieF"/>
    <property type="match status" value="1"/>
</dbReference>
<dbReference type="InterPro" id="IPR002524">
    <property type="entry name" value="Cation_efflux"/>
</dbReference>
<dbReference type="InterPro" id="IPR027470">
    <property type="entry name" value="Cation_efflux_CTD"/>
</dbReference>
<dbReference type="InterPro" id="IPR036837">
    <property type="entry name" value="Cation_efflux_CTD_sf"/>
</dbReference>
<dbReference type="InterPro" id="IPR023783">
    <property type="entry name" value="Cation_efflux_FieF"/>
</dbReference>
<dbReference type="InterPro" id="IPR027469">
    <property type="entry name" value="Cation_efflux_TMD_sf"/>
</dbReference>
<dbReference type="InterPro" id="IPR050291">
    <property type="entry name" value="CDF_Transporter"/>
</dbReference>
<dbReference type="NCBIfam" id="TIGR01297">
    <property type="entry name" value="CDF"/>
    <property type="match status" value="1"/>
</dbReference>
<dbReference type="NCBIfam" id="NF007064">
    <property type="entry name" value="PRK09509.1"/>
    <property type="match status" value="1"/>
</dbReference>
<dbReference type="PANTHER" id="PTHR43840:SF41">
    <property type="entry name" value="CATION-EFFLUX PUMP FIEF"/>
    <property type="match status" value="1"/>
</dbReference>
<dbReference type="PANTHER" id="PTHR43840">
    <property type="entry name" value="MITOCHONDRIAL METAL TRANSPORTER 1-RELATED"/>
    <property type="match status" value="1"/>
</dbReference>
<dbReference type="Pfam" id="PF01545">
    <property type="entry name" value="Cation_efflux"/>
    <property type="match status" value="1"/>
</dbReference>
<dbReference type="Pfam" id="PF16916">
    <property type="entry name" value="ZT_dimer"/>
    <property type="match status" value="1"/>
</dbReference>
<dbReference type="SUPFAM" id="SSF160240">
    <property type="entry name" value="Cation efflux protein cytoplasmic domain-like"/>
    <property type="match status" value="1"/>
</dbReference>
<dbReference type="SUPFAM" id="SSF161111">
    <property type="entry name" value="Cation efflux protein transmembrane domain-like"/>
    <property type="match status" value="1"/>
</dbReference>
<keyword id="KW-0997">Cell inner membrane</keyword>
<keyword id="KW-1003">Cell membrane</keyword>
<keyword id="KW-0406">Ion transport</keyword>
<keyword id="KW-0408">Iron</keyword>
<keyword id="KW-0410">Iron transport</keyword>
<keyword id="KW-0472">Membrane</keyword>
<keyword id="KW-0479">Metal-binding</keyword>
<keyword id="KW-0812">Transmembrane</keyword>
<keyword id="KW-1133">Transmembrane helix</keyword>
<keyword id="KW-0813">Transport</keyword>
<keyword id="KW-0862">Zinc</keyword>
<keyword id="KW-0864">Zinc transport</keyword>
<reference key="1">
    <citation type="journal article" date="2006" name="J. Bacteriol.">
        <title>Complete genome sequence of Yersinia pestis strains Antiqua and Nepal516: evidence of gene reduction in an emerging pathogen.</title>
        <authorList>
            <person name="Chain P.S.G."/>
            <person name="Hu P."/>
            <person name="Malfatti S.A."/>
            <person name="Radnedge L."/>
            <person name="Larimer F."/>
            <person name="Vergez L.M."/>
            <person name="Worsham P."/>
            <person name="Chu M.C."/>
            <person name="Andersen G.L."/>
        </authorList>
    </citation>
    <scope>NUCLEOTIDE SEQUENCE [LARGE SCALE GENOMIC DNA]</scope>
    <source>
        <strain>Antiqua</strain>
    </source>
</reference>
<feature type="chain" id="PRO_1000024332" description="Cation-efflux pump FieF">
    <location>
        <begin position="1"/>
        <end position="300"/>
    </location>
</feature>
<feature type="transmembrane region" description="Helical" evidence="1">
    <location>
        <begin position="12"/>
        <end position="32"/>
    </location>
</feature>
<feature type="transmembrane region" description="Helical" evidence="1">
    <location>
        <begin position="40"/>
        <end position="60"/>
    </location>
</feature>
<feature type="transmembrane region" description="Helical" evidence="1">
    <location>
        <begin position="82"/>
        <end position="102"/>
    </location>
</feature>
<feature type="transmembrane region" description="Helical" evidence="1">
    <location>
        <begin position="114"/>
        <end position="134"/>
    </location>
</feature>
<feature type="transmembrane region" description="Helical" evidence="1">
    <location>
        <begin position="155"/>
        <end position="175"/>
    </location>
</feature>
<feature type="transmembrane region" description="Helical" evidence="1">
    <location>
        <begin position="178"/>
        <end position="198"/>
    </location>
</feature>
<feature type="binding site" evidence="1">
    <location>
        <position position="45"/>
    </location>
    <ligand>
        <name>Zn(2+)</name>
        <dbReference type="ChEBI" id="CHEBI:29105"/>
    </ligand>
</feature>
<feature type="binding site" evidence="1">
    <location>
        <position position="49"/>
    </location>
    <ligand>
        <name>Zn(2+)</name>
        <dbReference type="ChEBI" id="CHEBI:29105"/>
    </ligand>
</feature>
<feature type="binding site" evidence="1">
    <location>
        <position position="153"/>
    </location>
    <ligand>
        <name>Zn(2+)</name>
        <dbReference type="ChEBI" id="CHEBI:29105"/>
    </ligand>
</feature>
<feature type="binding site" evidence="1">
    <location>
        <position position="157"/>
    </location>
    <ligand>
        <name>Zn(2+)</name>
        <dbReference type="ChEBI" id="CHEBI:29105"/>
    </ligand>
</feature>
<protein>
    <recommendedName>
        <fullName evidence="1">Cation-efflux pump FieF</fullName>
    </recommendedName>
</protein>
<sequence length="300" mass="33396">MDPQYARWVKAAALSATALASILLIIKIFAWWHTGSVSLLAALVDSLVDLAASLTNLFVVRYSLQPADEEHTFGHGKAESLAALAQSMFISGSALFLFLTGFRHLASPEPLQDPSIGIGVTLVALFSTLILVTFQRWVVRKTHSQAIRADMLHYQSDVLMNGAILIALALSWYGFRRADALFALGIGVYILYSALRMGYEAVQSLLDRALPDDERQQIIDIVTSWPGVIGAHDLRTRRSGQTRFIQLHLEMEDMMPLMEAHVLAEQVEHALLYRFPGADVLIHQDPCSVVPKERHAHWEL</sequence>
<gene>
    <name evidence="1" type="primary">fieF</name>
    <name type="ordered locus">YPA_3464</name>
</gene>
<organism>
    <name type="scientific">Yersinia pestis bv. Antiqua (strain Antiqua)</name>
    <dbReference type="NCBI Taxonomy" id="360102"/>
    <lineage>
        <taxon>Bacteria</taxon>
        <taxon>Pseudomonadati</taxon>
        <taxon>Pseudomonadota</taxon>
        <taxon>Gammaproteobacteria</taxon>
        <taxon>Enterobacterales</taxon>
        <taxon>Yersiniaceae</taxon>
        <taxon>Yersinia</taxon>
    </lineage>
</organism>
<accession>Q1C296</accession>